<name>THIL_XENTR</name>
<accession>Q5BKN8</accession>
<organism>
    <name type="scientific">Xenopus tropicalis</name>
    <name type="common">Western clawed frog</name>
    <name type="synonym">Silurana tropicalis</name>
    <dbReference type="NCBI Taxonomy" id="8364"/>
    <lineage>
        <taxon>Eukaryota</taxon>
        <taxon>Metazoa</taxon>
        <taxon>Chordata</taxon>
        <taxon>Craniata</taxon>
        <taxon>Vertebrata</taxon>
        <taxon>Euteleostomi</taxon>
        <taxon>Amphibia</taxon>
        <taxon>Batrachia</taxon>
        <taxon>Anura</taxon>
        <taxon>Pipoidea</taxon>
        <taxon>Pipidae</taxon>
        <taxon>Xenopodinae</taxon>
        <taxon>Xenopus</taxon>
        <taxon>Silurana</taxon>
    </lineage>
</organism>
<reference key="1">
    <citation type="submission" date="2005-03" db="EMBL/GenBank/DDBJ databases">
        <authorList>
            <consortium name="NIH - Xenopus Gene Collection (XGC) project"/>
        </authorList>
    </citation>
    <scope>NUCLEOTIDE SEQUENCE [LARGE SCALE MRNA]</scope>
</reference>
<keyword id="KW-0012">Acyltransferase</keyword>
<keyword id="KW-0276">Fatty acid metabolism</keyword>
<keyword id="KW-0443">Lipid metabolism</keyword>
<keyword id="KW-0479">Metal-binding</keyword>
<keyword id="KW-0496">Mitochondrion</keyword>
<keyword id="KW-0630">Potassium</keyword>
<keyword id="KW-1185">Reference proteome</keyword>
<keyword id="KW-0808">Transferase</keyword>
<keyword id="KW-0809">Transit peptide</keyword>
<feature type="transit peptide" description="Mitochondrion" evidence="1">
    <location>
        <begin position="1"/>
        <end position="33"/>
    </location>
</feature>
<feature type="chain" id="PRO_0000356278" description="Acetyl-CoA acetyltransferase, mitochondrial">
    <location>
        <begin position="34"/>
        <end position="420"/>
    </location>
</feature>
<feature type="active site" description="Acyl-thioester intermediate" evidence="2">
    <location>
        <position position="119"/>
    </location>
</feature>
<feature type="active site" description="Proton donor/acceptor" evidence="2">
    <location>
        <position position="406"/>
    </location>
</feature>
<feature type="binding site" evidence="2">
    <location>
        <position position="212"/>
    </location>
    <ligand>
        <name>CoA</name>
        <dbReference type="ChEBI" id="CHEBI:57287"/>
    </ligand>
</feature>
<feature type="binding site" evidence="2">
    <location>
        <position position="212"/>
    </location>
    <ligand>
        <name>K(+)</name>
        <dbReference type="ChEBI" id="CHEBI:29103"/>
    </ligand>
</feature>
<feature type="binding site" evidence="2">
    <location>
        <begin position="251"/>
        <end position="253"/>
    </location>
    <ligand>
        <name>CoA</name>
        <dbReference type="ChEBI" id="CHEBI:57287"/>
    </ligand>
</feature>
<feature type="binding site" evidence="2">
    <location>
        <position position="256"/>
    </location>
    <ligand>
        <name>CoA</name>
        <dbReference type="ChEBI" id="CHEBI:57287"/>
    </ligand>
</feature>
<feature type="binding site" evidence="2">
    <location>
        <position position="273"/>
    </location>
    <ligand>
        <name>K(+)</name>
        <dbReference type="ChEBI" id="CHEBI:29103"/>
    </ligand>
</feature>
<feature type="binding site" evidence="2">
    <location>
        <position position="274"/>
    </location>
    <ligand>
        <name>K(+)</name>
        <dbReference type="ChEBI" id="CHEBI:29103"/>
    </ligand>
</feature>
<feature type="binding site" evidence="2">
    <location>
        <position position="276"/>
    </location>
    <ligand>
        <name>K(+)</name>
        <dbReference type="ChEBI" id="CHEBI:29103"/>
    </ligand>
</feature>
<feature type="binding site" evidence="2">
    <location>
        <position position="277"/>
    </location>
    <ligand>
        <name>CoA</name>
        <dbReference type="ChEBI" id="CHEBI:57287"/>
    </ligand>
</feature>
<feature type="binding site" evidence="2">
    <location>
        <position position="374"/>
    </location>
    <ligand>
        <name>K(+)</name>
        <dbReference type="ChEBI" id="CHEBI:29103"/>
    </ligand>
</feature>
<feature type="site" description="Increases nucleophilicity of active site Cys" evidence="2">
    <location>
        <position position="378"/>
    </location>
</feature>
<comment type="function">
    <text evidence="2">This is one of the enzymes that catalyzes the last step of the mitochondrial beta-oxidation pathway, an aerobic process breaking down fatty acids into acetyl-CoA. Using free coenzyme A/CoA, catalyzes the thiolytic cleavage of medium- to long-chain 3-oxoacyl-CoAs into acetyl-CoA and a fatty acyl-CoA shortened by two carbon atoms. The activity of the enzyme is reversible and it can also catalyze the condensation of two acetyl-CoA molecules into acetoacetyl-CoA. Thereby, it plays a major role in ketone body metabolism.</text>
</comment>
<comment type="catalytic activity">
    <reaction evidence="3">
        <text>2 acetyl-CoA = acetoacetyl-CoA + CoA</text>
        <dbReference type="Rhea" id="RHEA:21036"/>
        <dbReference type="ChEBI" id="CHEBI:57286"/>
        <dbReference type="ChEBI" id="CHEBI:57287"/>
        <dbReference type="ChEBI" id="CHEBI:57288"/>
        <dbReference type="EC" id="2.3.1.9"/>
    </reaction>
    <physiologicalReaction direction="left-to-right" evidence="2">
        <dbReference type="Rhea" id="RHEA:21037"/>
    </physiologicalReaction>
    <physiologicalReaction direction="right-to-left" evidence="2">
        <dbReference type="Rhea" id="RHEA:21038"/>
    </physiologicalReaction>
</comment>
<comment type="catalytic activity">
    <reaction evidence="2">
        <text>propanoyl-CoA + acetyl-CoA = 2-methyl-3-oxobutanoyl-CoA + CoA</text>
        <dbReference type="Rhea" id="RHEA:30719"/>
        <dbReference type="ChEBI" id="CHEBI:57287"/>
        <dbReference type="ChEBI" id="CHEBI:57288"/>
        <dbReference type="ChEBI" id="CHEBI:57335"/>
        <dbReference type="ChEBI" id="CHEBI:57392"/>
    </reaction>
    <physiologicalReaction direction="left-to-right" evidence="2">
        <dbReference type="Rhea" id="RHEA:30720"/>
    </physiologicalReaction>
    <physiologicalReaction direction="right-to-left" evidence="2">
        <dbReference type="Rhea" id="RHEA:30721"/>
    </physiologicalReaction>
</comment>
<comment type="pathway">
    <text evidence="2">Lipid metabolism; fatty acid beta-oxidation.</text>
</comment>
<comment type="subunit">
    <text evidence="2">Homotetramer.</text>
</comment>
<comment type="subcellular location">
    <subcellularLocation>
        <location evidence="2">Mitochondrion</location>
    </subcellularLocation>
</comment>
<comment type="similarity">
    <text evidence="4">Belongs to the thiolase-like superfamily. Thiolase family.</text>
</comment>
<gene>
    <name type="primary">acat1</name>
</gene>
<protein>
    <recommendedName>
        <fullName>Acetyl-CoA acetyltransferase, mitochondrial</fullName>
        <ecNumber evidence="2">2.3.1.9</ecNumber>
    </recommendedName>
    <alternativeName>
        <fullName>Acetoacetyl-CoA thiolase</fullName>
    </alternativeName>
</protein>
<evidence type="ECO:0000250" key="1">
    <source>
        <dbReference type="UniProtKB" id="P17764"/>
    </source>
</evidence>
<evidence type="ECO:0000250" key="2">
    <source>
        <dbReference type="UniProtKB" id="P24752"/>
    </source>
</evidence>
<evidence type="ECO:0000255" key="3">
    <source>
        <dbReference type="PROSITE-ProRule" id="PRU10020"/>
    </source>
</evidence>
<evidence type="ECO:0000305" key="4"/>
<dbReference type="EC" id="2.3.1.9" evidence="2"/>
<dbReference type="EMBL" id="BC091004">
    <property type="protein sequence ID" value="AAH91004.1"/>
    <property type="molecule type" value="mRNA"/>
</dbReference>
<dbReference type="RefSeq" id="NP_001025572.1">
    <property type="nucleotide sequence ID" value="NM_001030401.1"/>
</dbReference>
<dbReference type="SMR" id="Q5BKN8"/>
<dbReference type="FunCoup" id="Q5BKN8">
    <property type="interactions" value="1631"/>
</dbReference>
<dbReference type="STRING" id="8364.ENSXETP00000040870"/>
<dbReference type="PaxDb" id="8364-ENSXETP00000031684"/>
<dbReference type="GeneID" id="594960"/>
<dbReference type="KEGG" id="xtr:594960"/>
<dbReference type="AGR" id="Xenbase:XB-GENE-977282"/>
<dbReference type="CTD" id="38"/>
<dbReference type="Xenbase" id="XB-GENE-977282">
    <property type="gene designation" value="acat1"/>
</dbReference>
<dbReference type="eggNOG" id="KOG1390">
    <property type="taxonomic scope" value="Eukaryota"/>
</dbReference>
<dbReference type="InParanoid" id="Q5BKN8"/>
<dbReference type="OMA" id="SMGTFGE"/>
<dbReference type="OrthoDB" id="5404651at2759"/>
<dbReference type="Reactome" id="R-XTR-70895">
    <property type="pathway name" value="Branched-chain amino acid catabolism"/>
</dbReference>
<dbReference type="Reactome" id="R-XTR-77108">
    <property type="pathway name" value="Utilization of Ketone Bodies"/>
</dbReference>
<dbReference type="Reactome" id="R-XTR-77111">
    <property type="pathway name" value="Synthesis of Ketone Bodies"/>
</dbReference>
<dbReference type="Reactome" id="R-XTR-9837999">
    <property type="pathway name" value="Mitochondrial protein degradation"/>
</dbReference>
<dbReference type="Reactome" id="R-XTR-9854311">
    <property type="pathway name" value="Maturation of TCA enzymes and regulation of TCA cycle"/>
</dbReference>
<dbReference type="UniPathway" id="UPA00659"/>
<dbReference type="Proteomes" id="UP000008143">
    <property type="component" value="Chromosome 2"/>
</dbReference>
<dbReference type="Bgee" id="ENSXETG00000014477">
    <property type="expression patterns" value="Expressed in skeletal muscle tissue and 14 other cell types or tissues"/>
</dbReference>
<dbReference type="GO" id="GO:0005739">
    <property type="term" value="C:mitochondrion"/>
    <property type="evidence" value="ECO:0007669"/>
    <property type="project" value="UniProtKB-SubCell"/>
</dbReference>
<dbReference type="GO" id="GO:0003985">
    <property type="term" value="F:acetyl-CoA C-acetyltransferase activity"/>
    <property type="evidence" value="ECO:0007669"/>
    <property type="project" value="UniProtKB-EC"/>
</dbReference>
<dbReference type="GO" id="GO:0046872">
    <property type="term" value="F:metal ion binding"/>
    <property type="evidence" value="ECO:0007669"/>
    <property type="project" value="UniProtKB-KW"/>
</dbReference>
<dbReference type="GO" id="GO:0006635">
    <property type="term" value="P:fatty acid beta-oxidation"/>
    <property type="evidence" value="ECO:0007669"/>
    <property type="project" value="UniProtKB-UniPathway"/>
</dbReference>
<dbReference type="CDD" id="cd00751">
    <property type="entry name" value="thiolase"/>
    <property type="match status" value="1"/>
</dbReference>
<dbReference type="FunFam" id="3.40.47.10:FF:000007">
    <property type="entry name" value="acetyl-CoA acetyltransferase, mitochondrial"/>
    <property type="match status" value="1"/>
</dbReference>
<dbReference type="Gene3D" id="3.40.47.10">
    <property type="match status" value="1"/>
</dbReference>
<dbReference type="InterPro" id="IPR002155">
    <property type="entry name" value="Thiolase"/>
</dbReference>
<dbReference type="InterPro" id="IPR016039">
    <property type="entry name" value="Thiolase-like"/>
</dbReference>
<dbReference type="InterPro" id="IPR020615">
    <property type="entry name" value="Thiolase_acyl_enz_int_AS"/>
</dbReference>
<dbReference type="InterPro" id="IPR020610">
    <property type="entry name" value="Thiolase_AS"/>
</dbReference>
<dbReference type="InterPro" id="IPR020617">
    <property type="entry name" value="Thiolase_C"/>
</dbReference>
<dbReference type="InterPro" id="IPR020613">
    <property type="entry name" value="Thiolase_CS"/>
</dbReference>
<dbReference type="InterPro" id="IPR020616">
    <property type="entry name" value="Thiolase_N"/>
</dbReference>
<dbReference type="NCBIfam" id="TIGR01930">
    <property type="entry name" value="AcCoA-C-Actrans"/>
    <property type="match status" value="1"/>
</dbReference>
<dbReference type="PANTHER" id="PTHR18919:SF156">
    <property type="entry name" value="ACETYL-COA ACETYLTRANSFERASE, MITOCHONDRIAL"/>
    <property type="match status" value="1"/>
</dbReference>
<dbReference type="PANTHER" id="PTHR18919">
    <property type="entry name" value="ACETYL-COA C-ACYLTRANSFERASE"/>
    <property type="match status" value="1"/>
</dbReference>
<dbReference type="Pfam" id="PF02803">
    <property type="entry name" value="Thiolase_C"/>
    <property type="match status" value="1"/>
</dbReference>
<dbReference type="Pfam" id="PF00108">
    <property type="entry name" value="Thiolase_N"/>
    <property type="match status" value="1"/>
</dbReference>
<dbReference type="PIRSF" id="PIRSF000429">
    <property type="entry name" value="Ac-CoA_Ac_transf"/>
    <property type="match status" value="1"/>
</dbReference>
<dbReference type="SUPFAM" id="SSF53901">
    <property type="entry name" value="Thiolase-like"/>
    <property type="match status" value="2"/>
</dbReference>
<dbReference type="PROSITE" id="PS00098">
    <property type="entry name" value="THIOLASE_1"/>
    <property type="match status" value="1"/>
</dbReference>
<dbReference type="PROSITE" id="PS00737">
    <property type="entry name" value="THIOLASE_2"/>
    <property type="match status" value="1"/>
</dbReference>
<dbReference type="PROSITE" id="PS00099">
    <property type="entry name" value="THIOLASE_3"/>
    <property type="match status" value="1"/>
</dbReference>
<sequence>MAFCGPRTAARLSHSTRALHYTHRGHVSQRTLNEVVIASAARTPIGSFQGSLSSLPATKLGSIAIKAAVERAGIPGDEVKEVYMGNVLQAGQGQAPSRQATLGAGLAISTPTTTINKVCASGMKSIMLAAQSLMCGHQQVMVAGGMESMSNVPYCMSRGATPYGGVKLEDIIVKDGLTDVYNKFHMGNCAENTAKKLSISREEQDSFAINSYTRSKAAWDSGLIANEIVSVTISQKGRPDIIVQEDEEYKRVDFSKFSKLKTVFQKDNGTVTAANASTLNDGAAALVLMTAGAASRLNVTPLARIVAFADAAVDPIDFPIAPAYAVPKLLSEAGLKKEDIAMWEINEAFSVVVLANVKMLDIDPARVNVNGGAVSLGHPIGMSGARIVGHMAHVLKKGQFGIAGICNGGGGASAVLIEKL</sequence>
<proteinExistence type="evidence at transcript level"/>